<organism>
    <name type="scientific">Saccharomyces cerevisiae (strain ATCC 204508 / S288c)</name>
    <name type="common">Baker's yeast</name>
    <dbReference type="NCBI Taxonomy" id="559292"/>
    <lineage>
        <taxon>Eukaryota</taxon>
        <taxon>Fungi</taxon>
        <taxon>Dikarya</taxon>
        <taxon>Ascomycota</taxon>
        <taxon>Saccharomycotina</taxon>
        <taxon>Saccharomycetes</taxon>
        <taxon>Saccharomycetales</taxon>
        <taxon>Saccharomycetaceae</taxon>
        <taxon>Saccharomyces</taxon>
    </lineage>
</organism>
<sequence length="187" mass="21590">MSAKQGWEKKSTNIDIASRKGMNVNNLSEHLQNLISSDSELGSRLLSLLLVSSGNAEELISMINNGQDVSQFKKLREPRKGKVAATTAVVVKEEEAPVSTSNELDKIKQERRRKNTEASQRFRIRKKQKNFENMNKLQNLNTQINKLRDRIEQLNKENEFWKAKLNDINEIKSLKLLNDIKRRNMGR</sequence>
<name>MET28_YEAST</name>
<comment type="function">
    <text evidence="3 4">Acts as an accessory factor in the activation of sulfur amino acids metabolism genes. Possesses no intrinsic transcription activation abilities. Binds to the MET16 promoter as a complex with MET4 and CBF1. Enhances the DNA-binding activity of CBF1.</text>
</comment>
<comment type="subunit">
    <text evidence="3 4 5">Interacts with MET4 to form a heteromeric complex which also includes CBF1. Forms two alternate complexes associating MET28 with MET4 and either MET31 or MET32. Binds to DNA through the MET4-MET28-CBF1 complex.</text>
</comment>
<comment type="interaction">
    <interactant intactId="EBI-11503">
        <id>P40573</id>
    </interactant>
    <interactant intactId="EBI-10757">
        <id>P32389</id>
        <label>MET4</label>
    </interactant>
    <organismsDiffer>false</organismsDiffer>
    <experiments>5</experiments>
</comment>
<comment type="subcellular location">
    <subcellularLocation>
        <location evidence="2">Cytoplasm</location>
    </subcellularLocation>
    <subcellularLocation>
        <location evidence="1 2">Nucleus</location>
    </subcellularLocation>
</comment>
<comment type="induction">
    <text evidence="4">Expression requires MET4, and is repressed by an increase of intracellular S-adenosylmethionine (AdoMet).</text>
</comment>
<comment type="similarity">
    <text evidence="6">Belongs to the bZIP family.</text>
</comment>
<comment type="sequence caution" evidence="6">
    <conflict type="erroneous initiation">
        <sequence resource="EMBL-CDS" id="AAC49425"/>
    </conflict>
</comment>
<feature type="chain" id="PRO_0000076520" description="Transcriptional activator of sulfur metabolism MET28">
    <location>
        <begin position="1"/>
        <end position="187"/>
    </location>
</feature>
<feature type="domain" description="bZIP" evidence="1">
    <location>
        <begin position="105"/>
        <end position="168"/>
    </location>
</feature>
<feature type="region of interest" description="Basic motif" evidence="1">
    <location>
        <begin position="106"/>
        <end position="136"/>
    </location>
</feature>
<feature type="region of interest" description="Leucine-zipper" evidence="1">
    <location>
        <begin position="137"/>
        <end position="151"/>
    </location>
</feature>
<proteinExistence type="evidence at protein level"/>
<accession>P40573</accession>
<accession>D6VVU7</accession>
<protein>
    <recommendedName>
        <fullName>Transcriptional activator of sulfur metabolism MET28</fullName>
    </recommendedName>
    <alternativeName>
        <fullName>Methionine-requiring protein 28</fullName>
    </alternativeName>
</protein>
<keyword id="KW-0010">Activator</keyword>
<keyword id="KW-0028">Amino-acid biosynthesis</keyword>
<keyword id="KW-0198">Cysteine biosynthesis</keyword>
<keyword id="KW-0963">Cytoplasm</keyword>
<keyword id="KW-0238">DNA-binding</keyword>
<keyword id="KW-0486">Methionine biosynthesis</keyword>
<keyword id="KW-0539">Nucleus</keyword>
<keyword id="KW-1185">Reference proteome</keyword>
<keyword id="KW-0804">Transcription</keyword>
<keyword id="KW-0805">Transcription regulation</keyword>
<gene>
    <name type="primary">MET28</name>
    <name type="ordered locus">YIR017C</name>
</gene>
<evidence type="ECO:0000255" key="1">
    <source>
        <dbReference type="PROSITE-ProRule" id="PRU00978"/>
    </source>
</evidence>
<evidence type="ECO:0000269" key="2">
    <source>
    </source>
</evidence>
<evidence type="ECO:0000269" key="3">
    <source>
    </source>
</evidence>
<evidence type="ECO:0000269" key="4">
    <source>
    </source>
</evidence>
<evidence type="ECO:0000269" key="5">
    <source>
    </source>
</evidence>
<evidence type="ECO:0000305" key="6"/>
<reference key="1">
    <citation type="journal article" date="1996" name="EMBO J.">
        <title>A heteromeric complex containing the centromere binding factor 1 and two basic leucine zipper factors, Met4 and Met28, mediates the transcription activation of yeast sulfur metabolism.</title>
        <authorList>
            <person name="Kuras L."/>
            <person name="Cherest H."/>
            <person name="Surdin-Kerjan Y."/>
            <person name="Thomas D."/>
        </authorList>
    </citation>
    <scope>NUCLEOTIDE SEQUENCE [GENOMIC DNA]</scope>
    <scope>FUNCTION</scope>
    <scope>SUBUNIT</scope>
    <scope>DNA-BINDING</scope>
    <source>
        <strain>ATCC 28383 / FL100 / VTT C-80102</strain>
    </source>
</reference>
<reference key="2">
    <citation type="journal article" date="1997" name="Nature">
        <title>The nucleotide sequence of Saccharomyces cerevisiae chromosome IX.</title>
        <authorList>
            <person name="Churcher C.M."/>
            <person name="Bowman S."/>
            <person name="Badcock K."/>
            <person name="Bankier A.T."/>
            <person name="Brown D."/>
            <person name="Chillingworth T."/>
            <person name="Connor R."/>
            <person name="Devlin K."/>
            <person name="Gentles S."/>
            <person name="Hamlin N."/>
            <person name="Harris D.E."/>
            <person name="Horsnell T."/>
            <person name="Hunt S."/>
            <person name="Jagels K."/>
            <person name="Jones M."/>
            <person name="Lye G."/>
            <person name="Moule S."/>
            <person name="Odell C."/>
            <person name="Pearson D."/>
            <person name="Rajandream M.A."/>
            <person name="Rice P."/>
            <person name="Rowley N."/>
            <person name="Skelton J."/>
            <person name="Smith V."/>
            <person name="Walsh S.V."/>
            <person name="Whitehead S."/>
            <person name="Barrell B.G."/>
        </authorList>
    </citation>
    <scope>NUCLEOTIDE SEQUENCE [LARGE SCALE GENOMIC DNA]</scope>
    <source>
        <strain>ATCC 204508 / S288c</strain>
    </source>
</reference>
<reference key="3">
    <citation type="journal article" date="2014" name="G3 (Bethesda)">
        <title>The reference genome sequence of Saccharomyces cerevisiae: Then and now.</title>
        <authorList>
            <person name="Engel S.R."/>
            <person name="Dietrich F.S."/>
            <person name="Fisk D.G."/>
            <person name="Binkley G."/>
            <person name="Balakrishnan R."/>
            <person name="Costanzo M.C."/>
            <person name="Dwight S.S."/>
            <person name="Hitz B.C."/>
            <person name="Karra K."/>
            <person name="Nash R.S."/>
            <person name="Weng S."/>
            <person name="Wong E.D."/>
            <person name="Lloyd P."/>
            <person name="Skrzypek M.S."/>
            <person name="Miyasato S.R."/>
            <person name="Simison M."/>
            <person name="Cherry J.M."/>
        </authorList>
    </citation>
    <scope>GENOME REANNOTATION</scope>
    <source>
        <strain>ATCC 204508 / S288c</strain>
    </source>
</reference>
<reference key="4">
    <citation type="journal article" date="1997" name="EMBO J.">
        <title>Assembly of a bZIP-bHLH transcription activation complex: formation of the yeast Cbf1-Met4-Met28 complex is regulated through Met28 stimulation of Cbf1 DNA binding.</title>
        <authorList>
            <person name="Kuras L."/>
            <person name="Barbey R."/>
            <person name="Thomas D."/>
        </authorList>
    </citation>
    <scope>FUNCTION</scope>
    <scope>SUBUNIT</scope>
    <scope>INDUCTION</scope>
</reference>
<reference key="5">
    <citation type="journal article" date="1998" name="EMBO J.">
        <title>Multiple transcriptional activation complexes tether the yeast activator Met4 to DNA.</title>
        <authorList>
            <person name="Blaiseau P.L."/>
            <person name="Thomas D."/>
        </authorList>
    </citation>
    <scope>SUBUNIT</scope>
</reference>
<reference key="6">
    <citation type="journal article" date="2003" name="Nature">
        <title>Global analysis of protein localization in budding yeast.</title>
        <authorList>
            <person name="Huh W.-K."/>
            <person name="Falvo J.V."/>
            <person name="Gerke L.C."/>
            <person name="Carroll A.S."/>
            <person name="Howson R.W."/>
            <person name="Weissman J.S."/>
            <person name="O'Shea E.K."/>
        </authorList>
    </citation>
    <scope>SUBCELLULAR LOCATION [LARGE SCALE ANALYSIS]</scope>
</reference>
<dbReference type="EMBL" id="U17015">
    <property type="protein sequence ID" value="AAC49425.1"/>
    <property type="status" value="ALT_INIT"/>
    <property type="molecule type" value="Genomic_DNA"/>
</dbReference>
<dbReference type="EMBL" id="Z37996">
    <property type="protein sequence ID" value="CAA86087.1"/>
    <property type="molecule type" value="Genomic_DNA"/>
</dbReference>
<dbReference type="EMBL" id="BK006942">
    <property type="protein sequence ID" value="DAA08563.1"/>
    <property type="molecule type" value="Genomic_DNA"/>
</dbReference>
<dbReference type="PIR" id="S48361">
    <property type="entry name" value="S48361"/>
</dbReference>
<dbReference type="RefSeq" id="NP_012282.3">
    <property type="nucleotide sequence ID" value="NM_001179539.3"/>
</dbReference>
<dbReference type="SMR" id="P40573"/>
<dbReference type="BioGRID" id="35009">
    <property type="interactions" value="163"/>
</dbReference>
<dbReference type="ComplexPortal" id="CPX-1015">
    <property type="entry name" value="MET4-MET28-MET32 sulfur metabolism transcription factor complex"/>
</dbReference>
<dbReference type="ComplexPortal" id="CPX-1016">
    <property type="entry name" value="CBF1-MET4-MET28 sulfur metabolism transcription factor complex"/>
</dbReference>
<dbReference type="ComplexPortal" id="CPX-999">
    <property type="entry name" value="MET4-MET28-MET31 sulfur metabolism transcription factor complex"/>
</dbReference>
<dbReference type="DIP" id="DIP-2242N"/>
<dbReference type="FunCoup" id="P40573">
    <property type="interactions" value="4520"/>
</dbReference>
<dbReference type="IntAct" id="P40573">
    <property type="interactions" value="6"/>
</dbReference>
<dbReference type="MINT" id="P40573"/>
<dbReference type="STRING" id="4932.YIR017C"/>
<dbReference type="iPTMnet" id="P40573"/>
<dbReference type="PaxDb" id="4932-YIR017C"/>
<dbReference type="PeptideAtlas" id="P40573"/>
<dbReference type="EnsemblFungi" id="YIR017C_mRNA">
    <property type="protein sequence ID" value="YIR017C"/>
    <property type="gene ID" value="YIR017C"/>
</dbReference>
<dbReference type="GeneID" id="854834"/>
<dbReference type="KEGG" id="sce:YIR017C"/>
<dbReference type="AGR" id="SGD:S000001456"/>
<dbReference type="SGD" id="S000001456">
    <property type="gene designation" value="MET28"/>
</dbReference>
<dbReference type="VEuPathDB" id="FungiDB:YIR017C"/>
<dbReference type="eggNOG" id="ENOG502S9W2">
    <property type="taxonomic scope" value="Eukaryota"/>
</dbReference>
<dbReference type="HOGENOM" id="CLU_098757_0_0_1"/>
<dbReference type="InParanoid" id="P40573"/>
<dbReference type="OMA" id="NKENEFW"/>
<dbReference type="OrthoDB" id="1939598at2759"/>
<dbReference type="BioCyc" id="YEAST:G3O-31437-MONOMER"/>
<dbReference type="BioGRID-ORCS" id="854834">
    <property type="hits" value="3 hits in 10 CRISPR screens"/>
</dbReference>
<dbReference type="PRO" id="PR:P40573"/>
<dbReference type="Proteomes" id="UP000002311">
    <property type="component" value="Chromosome IX"/>
</dbReference>
<dbReference type="RNAct" id="P40573">
    <property type="molecule type" value="protein"/>
</dbReference>
<dbReference type="GO" id="GO:0089713">
    <property type="term" value="C:Cbf1-Met4-Met28 complex"/>
    <property type="evidence" value="ECO:0000314"/>
    <property type="project" value="SGD"/>
</dbReference>
<dbReference type="GO" id="GO:0005737">
    <property type="term" value="C:cytoplasm"/>
    <property type="evidence" value="ECO:0007669"/>
    <property type="project" value="UniProtKB-SubCell"/>
</dbReference>
<dbReference type="GO" id="GO:0005634">
    <property type="term" value="C:nucleus"/>
    <property type="evidence" value="ECO:0007005"/>
    <property type="project" value="SGD"/>
</dbReference>
<dbReference type="GO" id="GO:0005667">
    <property type="term" value="C:transcription regulator complex"/>
    <property type="evidence" value="ECO:0000303"/>
    <property type="project" value="ComplexPortal"/>
</dbReference>
<dbReference type="GO" id="GO:0001228">
    <property type="term" value="F:DNA-binding transcription activator activity, RNA polymerase II-specific"/>
    <property type="evidence" value="ECO:0000318"/>
    <property type="project" value="GO_Central"/>
</dbReference>
<dbReference type="GO" id="GO:0000977">
    <property type="term" value="F:RNA polymerase II transcription regulatory region sequence-specific DNA binding"/>
    <property type="evidence" value="ECO:0000318"/>
    <property type="project" value="GO_Central"/>
</dbReference>
<dbReference type="GO" id="GO:0061629">
    <property type="term" value="F:RNA polymerase II-specific DNA-binding transcription factor binding"/>
    <property type="evidence" value="ECO:0000314"/>
    <property type="project" value="SGD"/>
</dbReference>
<dbReference type="GO" id="GO:0019344">
    <property type="term" value="P:cysteine biosynthetic process"/>
    <property type="evidence" value="ECO:0007669"/>
    <property type="project" value="UniProtKB-KW"/>
</dbReference>
<dbReference type="GO" id="GO:0009086">
    <property type="term" value="P:methionine biosynthetic process"/>
    <property type="evidence" value="ECO:0007669"/>
    <property type="project" value="UniProtKB-KW"/>
</dbReference>
<dbReference type="GO" id="GO:0045944">
    <property type="term" value="P:positive regulation of transcription by RNA polymerase II"/>
    <property type="evidence" value="ECO:0000303"/>
    <property type="project" value="ComplexPortal"/>
</dbReference>
<dbReference type="GO" id="GO:0031335">
    <property type="term" value="P:regulation of sulfur amino acid metabolic process"/>
    <property type="evidence" value="ECO:0000315"/>
    <property type="project" value="SGD"/>
</dbReference>
<dbReference type="GO" id="GO:0042762">
    <property type="term" value="P:regulation of sulfur metabolic process"/>
    <property type="evidence" value="ECO:0000303"/>
    <property type="project" value="ComplexPortal"/>
</dbReference>
<dbReference type="GO" id="GO:0006357">
    <property type="term" value="P:regulation of transcription by RNA polymerase II"/>
    <property type="evidence" value="ECO:0000315"/>
    <property type="project" value="SGD"/>
</dbReference>
<dbReference type="CDD" id="cd14705">
    <property type="entry name" value="bZIP_Zip1"/>
    <property type="match status" value="1"/>
</dbReference>
<dbReference type="Gene3D" id="1.20.5.170">
    <property type="match status" value="1"/>
</dbReference>
<dbReference type="InterPro" id="IPR004827">
    <property type="entry name" value="bZIP"/>
</dbReference>
<dbReference type="InterPro" id="IPR046347">
    <property type="entry name" value="bZIP_sf"/>
</dbReference>
<dbReference type="PANTHER" id="PTHR13044">
    <property type="entry name" value="ACTIVATING TRANSCRIPTION FACTOR ATF 4/5"/>
    <property type="match status" value="1"/>
</dbReference>
<dbReference type="PANTHER" id="PTHR13044:SF45">
    <property type="entry name" value="TRANSCRIPTIONAL ACTIVATOR OF SULFUR METABOLISM MET28"/>
    <property type="match status" value="1"/>
</dbReference>
<dbReference type="Pfam" id="PF07716">
    <property type="entry name" value="bZIP_2"/>
    <property type="match status" value="1"/>
</dbReference>
<dbReference type="SMART" id="SM00338">
    <property type="entry name" value="BRLZ"/>
    <property type="match status" value="1"/>
</dbReference>
<dbReference type="SUPFAM" id="SSF57959">
    <property type="entry name" value="Leucine zipper domain"/>
    <property type="match status" value="1"/>
</dbReference>
<dbReference type="PROSITE" id="PS50217">
    <property type="entry name" value="BZIP"/>
    <property type="match status" value="1"/>
</dbReference>
<dbReference type="PROSITE" id="PS00036">
    <property type="entry name" value="BZIP_BASIC"/>
    <property type="match status" value="1"/>
</dbReference>